<dbReference type="EC" id="6.3.2.4" evidence="2"/>
<dbReference type="EMBL" id="CP000544">
    <property type="protein sequence ID" value="ABM62852.1"/>
    <property type="molecule type" value="Genomic_DNA"/>
</dbReference>
<dbReference type="RefSeq" id="WP_011814874.1">
    <property type="nucleotide sequence ID" value="NC_008789.1"/>
</dbReference>
<dbReference type="SMR" id="A1WYU0"/>
<dbReference type="STRING" id="349124.Hhal_2088"/>
<dbReference type="KEGG" id="hha:Hhal_2088"/>
<dbReference type="eggNOG" id="COG1181">
    <property type="taxonomic scope" value="Bacteria"/>
</dbReference>
<dbReference type="HOGENOM" id="CLU_039268_1_2_6"/>
<dbReference type="OrthoDB" id="9813261at2"/>
<dbReference type="UniPathway" id="UPA00219"/>
<dbReference type="Proteomes" id="UP000000647">
    <property type="component" value="Chromosome"/>
</dbReference>
<dbReference type="GO" id="GO:0005737">
    <property type="term" value="C:cytoplasm"/>
    <property type="evidence" value="ECO:0007669"/>
    <property type="project" value="UniProtKB-SubCell"/>
</dbReference>
<dbReference type="GO" id="GO:0005524">
    <property type="term" value="F:ATP binding"/>
    <property type="evidence" value="ECO:0007669"/>
    <property type="project" value="UniProtKB-KW"/>
</dbReference>
<dbReference type="GO" id="GO:0008716">
    <property type="term" value="F:D-alanine-D-alanine ligase activity"/>
    <property type="evidence" value="ECO:0007669"/>
    <property type="project" value="UniProtKB-UniRule"/>
</dbReference>
<dbReference type="GO" id="GO:0046872">
    <property type="term" value="F:metal ion binding"/>
    <property type="evidence" value="ECO:0007669"/>
    <property type="project" value="UniProtKB-KW"/>
</dbReference>
<dbReference type="GO" id="GO:0071555">
    <property type="term" value="P:cell wall organization"/>
    <property type="evidence" value="ECO:0007669"/>
    <property type="project" value="UniProtKB-KW"/>
</dbReference>
<dbReference type="GO" id="GO:0009252">
    <property type="term" value="P:peptidoglycan biosynthetic process"/>
    <property type="evidence" value="ECO:0007669"/>
    <property type="project" value="UniProtKB-UniRule"/>
</dbReference>
<dbReference type="GO" id="GO:0008360">
    <property type="term" value="P:regulation of cell shape"/>
    <property type="evidence" value="ECO:0007669"/>
    <property type="project" value="UniProtKB-KW"/>
</dbReference>
<dbReference type="Gene3D" id="3.40.50.20">
    <property type="match status" value="1"/>
</dbReference>
<dbReference type="Gene3D" id="3.30.1490.20">
    <property type="entry name" value="ATP-grasp fold, A domain"/>
    <property type="match status" value="1"/>
</dbReference>
<dbReference type="Gene3D" id="3.30.470.20">
    <property type="entry name" value="ATP-grasp fold, B domain"/>
    <property type="match status" value="1"/>
</dbReference>
<dbReference type="HAMAP" id="MF_00047">
    <property type="entry name" value="Dala_Dala_lig"/>
    <property type="match status" value="1"/>
</dbReference>
<dbReference type="InterPro" id="IPR011761">
    <property type="entry name" value="ATP-grasp"/>
</dbReference>
<dbReference type="InterPro" id="IPR013815">
    <property type="entry name" value="ATP_grasp_subdomain_1"/>
</dbReference>
<dbReference type="InterPro" id="IPR000291">
    <property type="entry name" value="D-Ala_lig_Van_CS"/>
</dbReference>
<dbReference type="InterPro" id="IPR005905">
    <property type="entry name" value="D_ala_D_ala"/>
</dbReference>
<dbReference type="InterPro" id="IPR011095">
    <property type="entry name" value="Dala_Dala_lig_C"/>
</dbReference>
<dbReference type="InterPro" id="IPR011127">
    <property type="entry name" value="Dala_Dala_lig_N"/>
</dbReference>
<dbReference type="InterPro" id="IPR016185">
    <property type="entry name" value="PreATP-grasp_dom_sf"/>
</dbReference>
<dbReference type="NCBIfam" id="TIGR01205">
    <property type="entry name" value="D_ala_D_alaTIGR"/>
    <property type="match status" value="1"/>
</dbReference>
<dbReference type="NCBIfam" id="NF002378">
    <property type="entry name" value="PRK01372.1"/>
    <property type="match status" value="1"/>
</dbReference>
<dbReference type="PANTHER" id="PTHR23132">
    <property type="entry name" value="D-ALANINE--D-ALANINE LIGASE"/>
    <property type="match status" value="1"/>
</dbReference>
<dbReference type="PANTHER" id="PTHR23132:SF23">
    <property type="entry name" value="D-ALANINE--D-ALANINE LIGASE B"/>
    <property type="match status" value="1"/>
</dbReference>
<dbReference type="Pfam" id="PF07478">
    <property type="entry name" value="Dala_Dala_lig_C"/>
    <property type="match status" value="1"/>
</dbReference>
<dbReference type="Pfam" id="PF01820">
    <property type="entry name" value="Dala_Dala_lig_N"/>
    <property type="match status" value="1"/>
</dbReference>
<dbReference type="PIRSF" id="PIRSF039102">
    <property type="entry name" value="Ddl/VanB"/>
    <property type="match status" value="1"/>
</dbReference>
<dbReference type="SUPFAM" id="SSF56059">
    <property type="entry name" value="Glutathione synthetase ATP-binding domain-like"/>
    <property type="match status" value="1"/>
</dbReference>
<dbReference type="SUPFAM" id="SSF52440">
    <property type="entry name" value="PreATP-grasp domain"/>
    <property type="match status" value="1"/>
</dbReference>
<dbReference type="PROSITE" id="PS50975">
    <property type="entry name" value="ATP_GRASP"/>
    <property type="match status" value="1"/>
</dbReference>
<dbReference type="PROSITE" id="PS00843">
    <property type="entry name" value="DALA_DALA_LIGASE_1"/>
    <property type="match status" value="1"/>
</dbReference>
<dbReference type="PROSITE" id="PS00844">
    <property type="entry name" value="DALA_DALA_LIGASE_2"/>
    <property type="match status" value="1"/>
</dbReference>
<evidence type="ECO:0000250" key="1"/>
<evidence type="ECO:0000255" key="2">
    <source>
        <dbReference type="HAMAP-Rule" id="MF_00047"/>
    </source>
</evidence>
<feature type="chain" id="PRO_0000341107" description="D-alanine--D-alanine ligase">
    <location>
        <begin position="1"/>
        <end position="304"/>
    </location>
</feature>
<feature type="domain" description="ATP-grasp" evidence="2">
    <location>
        <begin position="107"/>
        <end position="300"/>
    </location>
</feature>
<feature type="binding site" evidence="2">
    <location>
        <begin position="134"/>
        <end position="186"/>
    </location>
    <ligand>
        <name>ATP</name>
        <dbReference type="ChEBI" id="CHEBI:30616"/>
    </ligand>
</feature>
<feature type="binding site" evidence="2">
    <location>
        <position position="254"/>
    </location>
    <ligand>
        <name>Mg(2+)</name>
        <dbReference type="ChEBI" id="CHEBI:18420"/>
        <label>1</label>
    </ligand>
</feature>
<feature type="binding site" evidence="2">
    <location>
        <position position="267"/>
    </location>
    <ligand>
        <name>Mg(2+)</name>
        <dbReference type="ChEBI" id="CHEBI:18420"/>
        <label>1</label>
    </ligand>
</feature>
<feature type="binding site" evidence="2">
    <location>
        <position position="267"/>
    </location>
    <ligand>
        <name>Mg(2+)</name>
        <dbReference type="ChEBI" id="CHEBI:18420"/>
        <label>2</label>
    </ligand>
</feature>
<feature type="binding site" evidence="2">
    <location>
        <position position="269"/>
    </location>
    <ligand>
        <name>Mg(2+)</name>
        <dbReference type="ChEBI" id="CHEBI:18420"/>
        <label>2</label>
    </ligand>
</feature>
<keyword id="KW-0067">ATP-binding</keyword>
<keyword id="KW-0133">Cell shape</keyword>
<keyword id="KW-0961">Cell wall biogenesis/degradation</keyword>
<keyword id="KW-0963">Cytoplasm</keyword>
<keyword id="KW-0436">Ligase</keyword>
<keyword id="KW-0460">Magnesium</keyword>
<keyword id="KW-0464">Manganese</keyword>
<keyword id="KW-0479">Metal-binding</keyword>
<keyword id="KW-0547">Nucleotide-binding</keyword>
<keyword id="KW-0573">Peptidoglycan synthesis</keyword>
<keyword id="KW-1185">Reference proteome</keyword>
<sequence length="304" mass="32262">MSGIPDPQRVGRVAVLMGGTSAERDISLRSGGAILAALQRCGYDAEAYDPRDRALEGLRGYDVVFIALHGRGGEDGTVQGLLDLLGIPYTGSGVLGSALGMDKWRCKRLWQGSGLPTPAGQLLTGDRPVLDEGVGYPVIVKPAREGSSLGMSRVEGPEELAEAYRVAAAYDDTVLAEAWVEGEEYTVALLGDQALPSIRLETPHAFFDYAAKYQAEDTGHHCPSGLGPEEEAELGALCREAFIASGGNGWGRVDVMRDTGGRWWLLEVNTIPGMTDHSLVPIAAAQAGIGFDELVARILGEALR</sequence>
<comment type="function">
    <text evidence="2">Cell wall formation.</text>
</comment>
<comment type="catalytic activity">
    <reaction evidence="2">
        <text>2 D-alanine + ATP = D-alanyl-D-alanine + ADP + phosphate + H(+)</text>
        <dbReference type="Rhea" id="RHEA:11224"/>
        <dbReference type="ChEBI" id="CHEBI:15378"/>
        <dbReference type="ChEBI" id="CHEBI:30616"/>
        <dbReference type="ChEBI" id="CHEBI:43474"/>
        <dbReference type="ChEBI" id="CHEBI:57416"/>
        <dbReference type="ChEBI" id="CHEBI:57822"/>
        <dbReference type="ChEBI" id="CHEBI:456216"/>
        <dbReference type="EC" id="6.3.2.4"/>
    </reaction>
</comment>
<comment type="cofactor">
    <cofactor evidence="1">
        <name>Mg(2+)</name>
        <dbReference type="ChEBI" id="CHEBI:18420"/>
    </cofactor>
    <cofactor evidence="1">
        <name>Mn(2+)</name>
        <dbReference type="ChEBI" id="CHEBI:29035"/>
    </cofactor>
    <text evidence="1">Binds 2 magnesium or manganese ions per subunit.</text>
</comment>
<comment type="pathway">
    <text evidence="2">Cell wall biogenesis; peptidoglycan biosynthesis.</text>
</comment>
<comment type="subcellular location">
    <subcellularLocation>
        <location evidence="2">Cytoplasm</location>
    </subcellularLocation>
</comment>
<comment type="similarity">
    <text evidence="2">Belongs to the D-alanine--D-alanine ligase family.</text>
</comment>
<proteinExistence type="inferred from homology"/>
<organism>
    <name type="scientific">Halorhodospira halophila (strain DSM 244 / SL1)</name>
    <name type="common">Ectothiorhodospira halophila (strain DSM 244 / SL1)</name>
    <dbReference type="NCBI Taxonomy" id="349124"/>
    <lineage>
        <taxon>Bacteria</taxon>
        <taxon>Pseudomonadati</taxon>
        <taxon>Pseudomonadota</taxon>
        <taxon>Gammaproteobacteria</taxon>
        <taxon>Chromatiales</taxon>
        <taxon>Ectothiorhodospiraceae</taxon>
        <taxon>Halorhodospira</taxon>
    </lineage>
</organism>
<protein>
    <recommendedName>
        <fullName evidence="2">D-alanine--D-alanine ligase</fullName>
        <ecNumber evidence="2">6.3.2.4</ecNumber>
    </recommendedName>
    <alternativeName>
        <fullName evidence="2">D-Ala-D-Ala ligase</fullName>
    </alternativeName>
    <alternativeName>
        <fullName evidence="2">D-alanylalanine synthetase</fullName>
    </alternativeName>
</protein>
<name>DDL_HALHL</name>
<gene>
    <name evidence="2" type="primary">ddl</name>
    <name type="ordered locus">Hhal_2088</name>
</gene>
<reference key="1">
    <citation type="submission" date="2006-12" db="EMBL/GenBank/DDBJ databases">
        <title>Complete sequence of Halorhodospira halophila SL1.</title>
        <authorList>
            <consortium name="US DOE Joint Genome Institute"/>
            <person name="Copeland A."/>
            <person name="Lucas S."/>
            <person name="Lapidus A."/>
            <person name="Barry K."/>
            <person name="Detter J.C."/>
            <person name="Glavina del Rio T."/>
            <person name="Hammon N."/>
            <person name="Israni S."/>
            <person name="Dalin E."/>
            <person name="Tice H."/>
            <person name="Pitluck S."/>
            <person name="Saunders E."/>
            <person name="Brettin T."/>
            <person name="Bruce D."/>
            <person name="Han C."/>
            <person name="Tapia R."/>
            <person name="Schmutz J."/>
            <person name="Larimer F."/>
            <person name="Land M."/>
            <person name="Hauser L."/>
            <person name="Kyrpides N."/>
            <person name="Mikhailova N."/>
            <person name="Hoff W."/>
            <person name="Richardson P."/>
        </authorList>
    </citation>
    <scope>NUCLEOTIDE SEQUENCE [LARGE SCALE GENOMIC DNA]</scope>
    <source>
        <strain>DSM 244 / SL1</strain>
    </source>
</reference>
<accession>A1WYU0</accession>